<accession>B8M2V6</accession>
<dbReference type="EMBL" id="EQ962653">
    <property type="protein sequence ID" value="EED22211.1"/>
    <property type="status" value="ALT_SEQ"/>
    <property type="molecule type" value="Genomic_DNA"/>
</dbReference>
<dbReference type="RefSeq" id="XP_002479174.1">
    <property type="nucleotide sequence ID" value="XM_002479129.1"/>
</dbReference>
<dbReference type="SMR" id="B8M2V6"/>
<dbReference type="STRING" id="441959.B8M2V6"/>
<dbReference type="GeneID" id="8103785"/>
<dbReference type="eggNOG" id="ENOG502S1MJ">
    <property type="taxonomic scope" value="Eukaryota"/>
</dbReference>
<dbReference type="HOGENOM" id="CLU_026794_0_0_1"/>
<dbReference type="InParanoid" id="B8M2V6"/>
<dbReference type="OrthoDB" id="3356905at2759"/>
<dbReference type="Proteomes" id="UP000001745">
    <property type="component" value="Unassembled WGS sequence"/>
</dbReference>
<dbReference type="GO" id="GO:0005789">
    <property type="term" value="C:endoplasmic reticulum membrane"/>
    <property type="evidence" value="ECO:0007669"/>
    <property type="project" value="UniProtKB-SubCell"/>
</dbReference>
<dbReference type="GO" id="GO:0032865">
    <property type="term" value="C:ERMES complex"/>
    <property type="evidence" value="ECO:0007669"/>
    <property type="project" value="UniProtKB-UniRule"/>
</dbReference>
<dbReference type="GO" id="GO:0008289">
    <property type="term" value="F:lipid binding"/>
    <property type="evidence" value="ECO:0007669"/>
    <property type="project" value="UniProtKB-KW"/>
</dbReference>
<dbReference type="GO" id="GO:0000002">
    <property type="term" value="P:mitochondrial genome maintenance"/>
    <property type="evidence" value="ECO:0007669"/>
    <property type="project" value="UniProtKB-UniRule"/>
</dbReference>
<dbReference type="GO" id="GO:1990456">
    <property type="term" value="P:mitochondrion-endoplasmic reticulum membrane tethering"/>
    <property type="evidence" value="ECO:0007669"/>
    <property type="project" value="TreeGrafter"/>
</dbReference>
<dbReference type="GO" id="GO:0015914">
    <property type="term" value="P:phospholipid transport"/>
    <property type="evidence" value="ECO:0007669"/>
    <property type="project" value="TreeGrafter"/>
</dbReference>
<dbReference type="GO" id="GO:0045040">
    <property type="term" value="P:protein insertion into mitochondrial outer membrane"/>
    <property type="evidence" value="ECO:0007669"/>
    <property type="project" value="UniProtKB-UniRule"/>
</dbReference>
<dbReference type="CDD" id="cd21672">
    <property type="entry name" value="SMP_Mdm12"/>
    <property type="match status" value="1"/>
</dbReference>
<dbReference type="HAMAP" id="MF_03104">
    <property type="entry name" value="Mdm12"/>
    <property type="match status" value="1"/>
</dbReference>
<dbReference type="InterPro" id="IPR027532">
    <property type="entry name" value="Mdm12"/>
</dbReference>
<dbReference type="InterPro" id="IPR019411">
    <property type="entry name" value="MMM1_dom"/>
</dbReference>
<dbReference type="InterPro" id="IPR031468">
    <property type="entry name" value="SMP_LBD"/>
</dbReference>
<dbReference type="PANTHER" id="PTHR28204">
    <property type="entry name" value="MITOCHONDRIAL DISTRIBUTION AND MORPHOLOGY PROTEIN 12"/>
    <property type="match status" value="1"/>
</dbReference>
<dbReference type="PANTHER" id="PTHR28204:SF1">
    <property type="entry name" value="MITOCHONDRIAL DISTRIBUTION AND MORPHOLOGY PROTEIN 12"/>
    <property type="match status" value="1"/>
</dbReference>
<dbReference type="Pfam" id="PF10296">
    <property type="entry name" value="MMM1"/>
    <property type="match status" value="1"/>
</dbReference>
<dbReference type="PROSITE" id="PS51847">
    <property type="entry name" value="SMP"/>
    <property type="match status" value="1"/>
</dbReference>
<proteinExistence type="inferred from homology"/>
<sequence length="491" mass="54300">MSIDLNWEAATSGPDGEQLAERIRSFIHDKFQQVPLPRFIRSVNVHSFEFGSIAPELEIKDICDPFVDFYEESDSSEDEDGEGHDAESDTSSDRAADSTADKRDMRYGHDDRGNNGHIPNHHDHLRTSQWVAGGTDGHSTQSPLRSPIGLGDHLNAHFRSTTPNILPGVTSNLGYHLMMGNLSGTQTPLAAVAGGTPFGPGWPDAVMNQGSRMTDHTTGRTRREDHNKNETGSPSRPSTAHTNPTQLSHGRSAASSSNNTSNDPTVIYNDHTSSTTATTYGLHEGGDRPRDKHGHRIDQEEPPPSPTPHMRERRPEDFQVICRVKYAGDVKLSLTAEILLDYPMPSFVGLPLKLNITGITFDGVAVVAYIRRRAHLCFLSPEDADALLGDEDDIQHPSYSTANTTTAASGSSTDNNNNNNESNDHPNHPPQPRRRFGSLLQQIRVDSEIGRKENGKQALKNVGKVERFVLDQVRRIFEDEFVFPSYWTFLV</sequence>
<evidence type="ECO:0000255" key="1">
    <source>
        <dbReference type="HAMAP-Rule" id="MF_03104"/>
    </source>
</evidence>
<evidence type="ECO:0000256" key="2">
    <source>
        <dbReference type="SAM" id="MobiDB-lite"/>
    </source>
</evidence>
<evidence type="ECO:0000305" key="3"/>
<keyword id="KW-0256">Endoplasmic reticulum</keyword>
<keyword id="KW-0445">Lipid transport</keyword>
<keyword id="KW-0446">Lipid-binding</keyword>
<keyword id="KW-0472">Membrane</keyword>
<keyword id="KW-0496">Mitochondrion</keyword>
<keyword id="KW-1000">Mitochondrion outer membrane</keyword>
<keyword id="KW-1185">Reference proteome</keyword>
<keyword id="KW-0813">Transport</keyword>
<name>MDM12_TALSN</name>
<protein>
    <recommendedName>
        <fullName evidence="1">Mitochondrial distribution and morphology protein 12</fullName>
    </recommendedName>
    <alternativeName>
        <fullName evidence="1">Mitochondrial inheritance component mdm12</fullName>
    </alternativeName>
</protein>
<reference key="1">
    <citation type="journal article" date="2015" name="Genome Announc.">
        <title>Genome sequence of the AIDS-associated pathogen Penicillium marneffei (ATCC18224) and its near taxonomic relative Talaromyces stipitatus (ATCC10500).</title>
        <authorList>
            <person name="Nierman W.C."/>
            <person name="Fedorova-Abrams N.D."/>
            <person name="Andrianopoulos A."/>
        </authorList>
    </citation>
    <scope>NUCLEOTIDE SEQUENCE [LARGE SCALE GENOMIC DNA]</scope>
    <source>
        <strain>ATCC 10500 / CBS 375.48 / QM 6759 / NRRL 1006</strain>
    </source>
</reference>
<feature type="chain" id="PRO_0000384314" description="Mitochondrial distribution and morphology protein 12">
    <location>
        <begin position="1"/>
        <end position="491"/>
    </location>
</feature>
<feature type="domain" description="SMP-LTD" evidence="1">
    <location>
        <begin position="1"/>
        <end position="491"/>
    </location>
</feature>
<feature type="region of interest" description="Disordered" evidence="2">
    <location>
        <begin position="72"/>
        <end position="123"/>
    </location>
</feature>
<feature type="region of interest" description="Disordered" evidence="2">
    <location>
        <begin position="201"/>
        <end position="313"/>
    </location>
</feature>
<feature type="region of interest" description="Disordered" evidence="2">
    <location>
        <begin position="389"/>
        <end position="434"/>
    </location>
</feature>
<feature type="compositionally biased region" description="Acidic residues" evidence="2">
    <location>
        <begin position="72"/>
        <end position="82"/>
    </location>
</feature>
<feature type="compositionally biased region" description="Basic and acidic residues" evidence="2">
    <location>
        <begin position="83"/>
        <end position="123"/>
    </location>
</feature>
<feature type="compositionally biased region" description="Basic and acidic residues" evidence="2">
    <location>
        <begin position="213"/>
        <end position="229"/>
    </location>
</feature>
<feature type="compositionally biased region" description="Polar residues" evidence="2">
    <location>
        <begin position="230"/>
        <end position="249"/>
    </location>
</feature>
<feature type="compositionally biased region" description="Low complexity" evidence="2">
    <location>
        <begin position="252"/>
        <end position="262"/>
    </location>
</feature>
<feature type="compositionally biased region" description="Polar residues" evidence="2">
    <location>
        <begin position="270"/>
        <end position="279"/>
    </location>
</feature>
<feature type="compositionally biased region" description="Low complexity" evidence="2">
    <location>
        <begin position="400"/>
        <end position="421"/>
    </location>
</feature>
<organism>
    <name type="scientific">Talaromyces stipitatus (strain ATCC 10500 / CBS 375.48 / QM 6759 / NRRL 1006)</name>
    <name type="common">Penicillium stipitatum</name>
    <dbReference type="NCBI Taxonomy" id="441959"/>
    <lineage>
        <taxon>Eukaryota</taxon>
        <taxon>Fungi</taxon>
        <taxon>Dikarya</taxon>
        <taxon>Ascomycota</taxon>
        <taxon>Pezizomycotina</taxon>
        <taxon>Eurotiomycetes</taxon>
        <taxon>Eurotiomycetidae</taxon>
        <taxon>Eurotiales</taxon>
        <taxon>Trichocomaceae</taxon>
        <taxon>Talaromyces</taxon>
        <taxon>Talaromyces sect. Talaromyces</taxon>
    </lineage>
</organism>
<gene>
    <name evidence="1" type="primary">mdm12</name>
    <name type="ORF">TSTA_094570</name>
</gene>
<comment type="function">
    <text evidence="1">Component of the ERMES/MDM complex, which serves as a molecular tether to connect the endoplasmic reticulum (ER) and mitochondria. Components of this complex are involved in the control of mitochondrial shape and protein biogenesis, and function in nonvesicular lipid trafficking between the ER and mitochondria. Mdm12 is required for the interaction of the ER-resident membrane protein mmm1 and the outer mitochondrial membrane-resident beta-barrel protein mdm10. The mdm12-mmm1 subcomplex functions in the major beta-barrel assembly pathway that is responsible for biogenesis of all mitochondrial outer membrane beta-barrel proteins, and acts in a late step after the SAM complex. The mdm10-mdm12-mmm1 subcomplex further acts in the TOM40-specific pathway after the action of the mdm12-mmm1 complex. Essential for establishing and maintaining the structure of mitochondria and maintenance of mtDNA nucleoids.</text>
</comment>
<comment type="subunit">
    <text evidence="1">Component of the ER-mitochondria encounter structure (ERMES) or MDM complex, composed of mmm1, mdm10, mdm12 and mdm34. A mmm1 homodimer associates with one molecule of mdm12 on each side in a pairwise head-to-tail manner, and the SMP-LTD domains of mmm1 and mdm12 generate a continuous hydrophobic tunnel for phospholipid trafficking.</text>
</comment>
<comment type="subcellular location">
    <subcellularLocation>
        <location evidence="1">Mitochondrion outer membrane</location>
        <topology evidence="1">Peripheral membrane protein</topology>
        <orientation evidence="1">Cytoplasmic side</orientation>
    </subcellularLocation>
    <subcellularLocation>
        <location evidence="1">Endoplasmic reticulum membrane</location>
        <topology evidence="1">Peripheral membrane protein</topology>
        <orientation evidence="1">Cytoplasmic side</orientation>
    </subcellularLocation>
    <text evidence="1">The ERMES/MDM complex localizes to a few discrete foci (around 10 per single cell), that represent mitochondria-endoplasmic reticulum junctions. These foci are often found next to mtDNA nucleoids.</text>
</comment>
<comment type="domain">
    <text evidence="1">The SMP-LTD domain is a barrel-like domain that can bind various types of glycerophospholipids in its interior and mediate their transfer between two adjacent bilayers.</text>
</comment>
<comment type="similarity">
    <text evidence="1">Belongs to the MDM12 family.</text>
</comment>
<comment type="sequence caution" evidence="3">
    <conflict type="erroneous gene model prediction">
        <sequence resource="EMBL-CDS" id="EED22211"/>
    </conflict>
</comment>